<proteinExistence type="evidence at protein level"/>
<sequence length="76" mass="7960">MTDVETTYADFIASGRTGRRNAIHDILVSSASGNSNELALKLAGLDINKTEGEDDGQRSSTEQSGEAQGEAAKSES</sequence>
<gene>
    <name type="primary">Pkia</name>
</gene>
<accession>P63249</accession>
<accession>P27776</accession>
<name>IPKA_RAT</name>
<comment type="function">
    <text>Extremely potent competitive inhibitor of cAMP-dependent protein kinase activity, this protein interacts with the catalytic subunit of the enzyme after the cAMP-induced dissociation of its regulatory chains.</text>
</comment>
<comment type="tissue specificity">
    <text>Highest expression in muscle (both skeletal and cardiac) and brain.</text>
</comment>
<comment type="miscellaneous">
    <text evidence="1">The inhibitory site contains regions very similar to the hinge regions (sites that directly interact with the enzyme active site) and 'pseudosubstrate site' of the regulatory chains; but, unlike these chains, PKI does not contain cAMP-binding sites. The arginine residues within the inhibitory site are essential for inhibition and recognition of the enzyme active site (By similarity).</text>
</comment>
<comment type="similarity">
    <text evidence="4">Belongs to the PKI family.</text>
</comment>
<evidence type="ECO:0000250" key="1"/>
<evidence type="ECO:0000250" key="2">
    <source>
        <dbReference type="UniProtKB" id="P61925"/>
    </source>
</evidence>
<evidence type="ECO:0000256" key="3">
    <source>
        <dbReference type="SAM" id="MobiDB-lite"/>
    </source>
</evidence>
<evidence type="ECO:0000305" key="4"/>
<evidence type="ECO:0007829" key="5">
    <source>
        <dbReference type="PDB" id="1Q8U"/>
    </source>
</evidence>
<keyword id="KW-0002">3D-structure</keyword>
<keyword id="KW-0007">Acetylation</keyword>
<keyword id="KW-0649">Protein kinase inhibitor</keyword>
<keyword id="KW-1185">Reference proteome</keyword>
<reference key="1">
    <citation type="journal article" date="1992" name="Mol. Endocrinol.">
        <title>The alpha- and beta-isoforms of the inhibitor protein of the 3',5'-cyclic adenosine monophosphate-dependent protein kinase: characteristics and tissue- and developmental-specific expression.</title>
        <authorList>
            <person name="van Patten S.M."/>
            <person name="Howard P."/>
            <person name="Walsh D.A."/>
            <person name="Maurer R.A."/>
        </authorList>
    </citation>
    <scope>NUCLEOTIDE SEQUENCE [MRNA]</scope>
</reference>
<feature type="initiator methionine" description="Removed" evidence="2">
    <location>
        <position position="1"/>
    </location>
</feature>
<feature type="chain" id="PRO_0000154536" description="cAMP-dependent protein kinase inhibitor alpha">
    <location>
        <begin position="2"/>
        <end position="76"/>
    </location>
</feature>
<feature type="region of interest" description="Disordered" evidence="3">
    <location>
        <begin position="49"/>
        <end position="76"/>
    </location>
</feature>
<feature type="site" description="Important for inhibition" evidence="1">
    <location>
        <position position="16"/>
    </location>
</feature>
<feature type="site" description="Important for inhibition" evidence="1">
    <location>
        <position position="19"/>
    </location>
</feature>
<feature type="site" description="Important for inhibition" evidence="1">
    <location>
        <position position="20"/>
    </location>
</feature>
<feature type="modified residue" description="N-acetylthreonine" evidence="2">
    <location>
        <position position="2"/>
    </location>
</feature>
<feature type="helix" evidence="5">
    <location>
        <begin position="7"/>
        <end position="12"/>
    </location>
</feature>
<organism>
    <name type="scientific">Rattus norvegicus</name>
    <name type="common">Rat</name>
    <dbReference type="NCBI Taxonomy" id="10116"/>
    <lineage>
        <taxon>Eukaryota</taxon>
        <taxon>Metazoa</taxon>
        <taxon>Chordata</taxon>
        <taxon>Craniata</taxon>
        <taxon>Vertebrata</taxon>
        <taxon>Euteleostomi</taxon>
        <taxon>Mammalia</taxon>
        <taxon>Eutheria</taxon>
        <taxon>Euarchontoglires</taxon>
        <taxon>Glires</taxon>
        <taxon>Rodentia</taxon>
        <taxon>Myomorpha</taxon>
        <taxon>Muroidea</taxon>
        <taxon>Muridae</taxon>
        <taxon>Murinae</taxon>
        <taxon>Rattus</taxon>
    </lineage>
</organism>
<dbReference type="EMBL" id="L02615">
    <property type="protein sequence ID" value="AAA40867.1"/>
    <property type="molecule type" value="mRNA"/>
</dbReference>
<dbReference type="RefSeq" id="NP_446224.1">
    <property type="nucleotide sequence ID" value="NM_053772.2"/>
</dbReference>
<dbReference type="RefSeq" id="XP_006232217.1">
    <property type="nucleotide sequence ID" value="XM_006232155.5"/>
</dbReference>
<dbReference type="RefSeq" id="XP_006232218.1">
    <property type="nucleotide sequence ID" value="XM_006232156.3"/>
</dbReference>
<dbReference type="RefSeq" id="XP_008759079.2">
    <property type="nucleotide sequence ID" value="XM_008760857.3"/>
</dbReference>
<dbReference type="PDB" id="1L3R">
    <property type="method" value="X-ray"/>
    <property type="resolution" value="2.00 A"/>
    <property type="chains" value="I=6-25"/>
</dbReference>
<dbReference type="PDB" id="1Q62">
    <property type="method" value="X-ray"/>
    <property type="resolution" value="2.30 A"/>
    <property type="chains" value="I=6-25"/>
</dbReference>
<dbReference type="PDB" id="1Q8U">
    <property type="method" value="X-ray"/>
    <property type="resolution" value="1.90 A"/>
    <property type="chains" value="B=6-25"/>
</dbReference>
<dbReference type="PDB" id="1SVH">
    <property type="method" value="X-ray"/>
    <property type="resolution" value="2.30 A"/>
    <property type="chains" value="B=6-25"/>
</dbReference>
<dbReference type="PDB" id="1YDS">
    <property type="method" value="X-ray"/>
    <property type="resolution" value="2.20 A"/>
    <property type="chains" value="I=6-25"/>
</dbReference>
<dbReference type="PDB" id="1YDT">
    <property type="method" value="X-ray"/>
    <property type="resolution" value="2.30 A"/>
    <property type="chains" value="I=6-25"/>
</dbReference>
<dbReference type="PDBsum" id="1L3R"/>
<dbReference type="PDBsum" id="1Q62"/>
<dbReference type="PDBsum" id="1Q8U"/>
<dbReference type="PDBsum" id="1SVH"/>
<dbReference type="PDBsum" id="1YDS"/>
<dbReference type="PDBsum" id="1YDT"/>
<dbReference type="BMRB" id="P63249"/>
<dbReference type="SMR" id="P63249"/>
<dbReference type="FunCoup" id="P63249">
    <property type="interactions" value="1109"/>
</dbReference>
<dbReference type="STRING" id="10116.ENSRNOP00000016567"/>
<dbReference type="PhosphoSitePlus" id="P63249"/>
<dbReference type="PaxDb" id="10116-ENSRNOP00000016567"/>
<dbReference type="GeneID" id="114906"/>
<dbReference type="KEGG" id="rno:114906"/>
<dbReference type="UCSC" id="RGD:621021">
    <property type="organism name" value="rat"/>
</dbReference>
<dbReference type="AGR" id="RGD:621021"/>
<dbReference type="CTD" id="5569"/>
<dbReference type="RGD" id="621021">
    <property type="gene designation" value="Pkia"/>
</dbReference>
<dbReference type="VEuPathDB" id="HostDB:ENSRNOG00000012095"/>
<dbReference type="eggNOG" id="ENOG502S6JP">
    <property type="taxonomic scope" value="Eukaryota"/>
</dbReference>
<dbReference type="HOGENOM" id="CLU_163471_2_0_1"/>
<dbReference type="InParanoid" id="P63249"/>
<dbReference type="PhylomeDB" id="P63249"/>
<dbReference type="TreeFam" id="TF330809"/>
<dbReference type="EvolutionaryTrace" id="P63249"/>
<dbReference type="PRO" id="PR:P63249"/>
<dbReference type="Proteomes" id="UP000002494">
    <property type="component" value="Chromosome 2"/>
</dbReference>
<dbReference type="Bgee" id="ENSRNOG00000012095">
    <property type="expression patterns" value="Expressed in quadriceps femoris and 19 other cell types or tissues"/>
</dbReference>
<dbReference type="GO" id="GO:0005737">
    <property type="term" value="C:cytoplasm"/>
    <property type="evidence" value="ECO:0000266"/>
    <property type="project" value="RGD"/>
</dbReference>
<dbReference type="GO" id="GO:0005634">
    <property type="term" value="C:nucleus"/>
    <property type="evidence" value="ECO:0000266"/>
    <property type="project" value="RGD"/>
</dbReference>
<dbReference type="GO" id="GO:0004862">
    <property type="term" value="F:cAMP-dependent protein kinase inhibitor activity"/>
    <property type="evidence" value="ECO:0000266"/>
    <property type="project" value="RGD"/>
</dbReference>
<dbReference type="GO" id="GO:0034236">
    <property type="term" value="F:protein kinase A catalytic subunit binding"/>
    <property type="evidence" value="ECO:0000266"/>
    <property type="project" value="RGD"/>
</dbReference>
<dbReference type="GO" id="GO:0141162">
    <property type="term" value="P:negative regulation of cAMP/PKA signal transduction"/>
    <property type="evidence" value="ECO:0000266"/>
    <property type="project" value="RGD"/>
</dbReference>
<dbReference type="GO" id="GO:0042308">
    <property type="term" value="P:negative regulation of protein import into nucleus"/>
    <property type="evidence" value="ECO:0000266"/>
    <property type="project" value="RGD"/>
</dbReference>
<dbReference type="GO" id="GO:0000122">
    <property type="term" value="P:negative regulation of transcription by RNA polymerase II"/>
    <property type="evidence" value="ECO:0000266"/>
    <property type="project" value="RGD"/>
</dbReference>
<dbReference type="GO" id="GO:0010389">
    <property type="term" value="P:regulation of G2/M transition of mitotic cell cycle"/>
    <property type="evidence" value="ECO:0000266"/>
    <property type="project" value="RGD"/>
</dbReference>
<dbReference type="InterPro" id="IPR004171">
    <property type="entry name" value="cAMP_dep_PKI"/>
</dbReference>
<dbReference type="PANTHER" id="PTHR15416">
    <property type="entry name" value="CAMP-DEPENDENT PROTEIN KINASE INHIBITOR/PKI"/>
    <property type="match status" value="1"/>
</dbReference>
<dbReference type="Pfam" id="PF02827">
    <property type="entry name" value="PKI"/>
    <property type="match status" value="1"/>
</dbReference>
<dbReference type="PIRSF" id="PIRSF001667">
    <property type="entry name" value="PKI"/>
    <property type="match status" value="1"/>
</dbReference>
<protein>
    <recommendedName>
        <fullName>cAMP-dependent protein kinase inhibitor alpha</fullName>
        <shortName>PKI-alpha</shortName>
    </recommendedName>
    <alternativeName>
        <fullName>cAMP-dependent protein kinase inhibitor, muscle/brain isoform</fullName>
    </alternativeName>
</protein>